<accession>Q9PHK8</accession>
<accession>Q0PAK9</accession>
<organism>
    <name type="scientific">Campylobacter jejuni subsp. jejuni serotype O:2 (strain ATCC 700819 / NCTC 11168)</name>
    <dbReference type="NCBI Taxonomy" id="192222"/>
    <lineage>
        <taxon>Bacteria</taxon>
        <taxon>Pseudomonadati</taxon>
        <taxon>Campylobacterota</taxon>
        <taxon>Epsilonproteobacteria</taxon>
        <taxon>Campylobacterales</taxon>
        <taxon>Campylobacteraceae</taxon>
        <taxon>Campylobacter</taxon>
    </lineage>
</organism>
<gene>
    <name evidence="1" type="primary">rplI</name>
    <name type="ordered locus">Cj0664c</name>
</gene>
<keyword id="KW-1185">Reference proteome</keyword>
<keyword id="KW-0687">Ribonucleoprotein</keyword>
<keyword id="KW-0689">Ribosomal protein</keyword>
<keyword id="KW-0694">RNA-binding</keyword>
<keyword id="KW-0699">rRNA-binding</keyword>
<protein>
    <recommendedName>
        <fullName evidence="1">Large ribosomal subunit protein bL9</fullName>
    </recommendedName>
    <alternativeName>
        <fullName evidence="2">50S ribosomal protein L9</fullName>
    </alternativeName>
</protein>
<comment type="function">
    <text evidence="1">Binds to the 23S rRNA.</text>
</comment>
<comment type="similarity">
    <text evidence="1">Belongs to the bacterial ribosomal protein bL9 family.</text>
</comment>
<dbReference type="EMBL" id="AL111168">
    <property type="protein sequence ID" value="CAL34805.1"/>
    <property type="molecule type" value="Genomic_DNA"/>
</dbReference>
<dbReference type="PIR" id="B81415">
    <property type="entry name" value="B81415"/>
</dbReference>
<dbReference type="RefSeq" id="WP_002781628.1">
    <property type="nucleotide sequence ID" value="NZ_SZUC01000002.1"/>
</dbReference>
<dbReference type="RefSeq" id="YP_002344088.1">
    <property type="nucleotide sequence ID" value="NC_002163.1"/>
</dbReference>
<dbReference type="SMR" id="Q9PHK8"/>
<dbReference type="IntAct" id="Q9PHK8">
    <property type="interactions" value="3"/>
</dbReference>
<dbReference type="STRING" id="192222.Cj0664c"/>
<dbReference type="PaxDb" id="192222-Cj0664c"/>
<dbReference type="EnsemblBacteria" id="CAL34805">
    <property type="protein sequence ID" value="CAL34805"/>
    <property type="gene ID" value="Cj0664c"/>
</dbReference>
<dbReference type="GeneID" id="904987"/>
<dbReference type="KEGG" id="cje:Cj0664c"/>
<dbReference type="PATRIC" id="fig|192222.6.peg.656"/>
<dbReference type="eggNOG" id="COG0359">
    <property type="taxonomic scope" value="Bacteria"/>
</dbReference>
<dbReference type="HOGENOM" id="CLU_078938_3_0_7"/>
<dbReference type="OrthoDB" id="9788336at2"/>
<dbReference type="Proteomes" id="UP000000799">
    <property type="component" value="Chromosome"/>
</dbReference>
<dbReference type="GO" id="GO:1990904">
    <property type="term" value="C:ribonucleoprotein complex"/>
    <property type="evidence" value="ECO:0007669"/>
    <property type="project" value="UniProtKB-KW"/>
</dbReference>
<dbReference type="GO" id="GO:0005840">
    <property type="term" value="C:ribosome"/>
    <property type="evidence" value="ECO:0007669"/>
    <property type="project" value="UniProtKB-KW"/>
</dbReference>
<dbReference type="GO" id="GO:0019843">
    <property type="term" value="F:rRNA binding"/>
    <property type="evidence" value="ECO:0007669"/>
    <property type="project" value="UniProtKB-UniRule"/>
</dbReference>
<dbReference type="GO" id="GO:0003735">
    <property type="term" value="F:structural constituent of ribosome"/>
    <property type="evidence" value="ECO:0007669"/>
    <property type="project" value="InterPro"/>
</dbReference>
<dbReference type="GO" id="GO:0006412">
    <property type="term" value="P:translation"/>
    <property type="evidence" value="ECO:0007669"/>
    <property type="project" value="UniProtKB-UniRule"/>
</dbReference>
<dbReference type="FunFam" id="3.10.430.100:FF:000003">
    <property type="entry name" value="50S ribosomal protein L9"/>
    <property type="match status" value="1"/>
</dbReference>
<dbReference type="FunFam" id="3.40.5.10:FF:000002">
    <property type="entry name" value="50S ribosomal protein L9"/>
    <property type="match status" value="1"/>
</dbReference>
<dbReference type="Gene3D" id="3.10.430.100">
    <property type="entry name" value="Ribosomal protein L9, C-terminal domain"/>
    <property type="match status" value="1"/>
</dbReference>
<dbReference type="Gene3D" id="3.40.5.10">
    <property type="entry name" value="Ribosomal protein L9, N-terminal domain"/>
    <property type="match status" value="1"/>
</dbReference>
<dbReference type="HAMAP" id="MF_00503">
    <property type="entry name" value="Ribosomal_bL9"/>
    <property type="match status" value="1"/>
</dbReference>
<dbReference type="InterPro" id="IPR000244">
    <property type="entry name" value="Ribosomal_bL9"/>
</dbReference>
<dbReference type="InterPro" id="IPR009027">
    <property type="entry name" value="Ribosomal_bL9/RNase_H1_N"/>
</dbReference>
<dbReference type="InterPro" id="IPR020594">
    <property type="entry name" value="Ribosomal_bL9_bac/chp"/>
</dbReference>
<dbReference type="InterPro" id="IPR020069">
    <property type="entry name" value="Ribosomal_bL9_C"/>
</dbReference>
<dbReference type="InterPro" id="IPR036791">
    <property type="entry name" value="Ribosomal_bL9_C_sf"/>
</dbReference>
<dbReference type="InterPro" id="IPR020070">
    <property type="entry name" value="Ribosomal_bL9_N"/>
</dbReference>
<dbReference type="InterPro" id="IPR036935">
    <property type="entry name" value="Ribosomal_bL9_N_sf"/>
</dbReference>
<dbReference type="NCBIfam" id="TIGR00158">
    <property type="entry name" value="L9"/>
    <property type="match status" value="1"/>
</dbReference>
<dbReference type="PANTHER" id="PTHR21368">
    <property type="entry name" value="50S RIBOSOMAL PROTEIN L9"/>
    <property type="match status" value="1"/>
</dbReference>
<dbReference type="Pfam" id="PF03948">
    <property type="entry name" value="Ribosomal_L9_C"/>
    <property type="match status" value="1"/>
</dbReference>
<dbReference type="Pfam" id="PF01281">
    <property type="entry name" value="Ribosomal_L9_N"/>
    <property type="match status" value="1"/>
</dbReference>
<dbReference type="SUPFAM" id="SSF55658">
    <property type="entry name" value="L9 N-domain-like"/>
    <property type="match status" value="1"/>
</dbReference>
<dbReference type="SUPFAM" id="SSF55653">
    <property type="entry name" value="Ribosomal protein L9 C-domain"/>
    <property type="match status" value="1"/>
</dbReference>
<dbReference type="PROSITE" id="PS00651">
    <property type="entry name" value="RIBOSOMAL_L9"/>
    <property type="match status" value="1"/>
</dbReference>
<sequence>MKVLLIKDVKALGKAGEIKEVKDGYGQNFLIAKGFAKAATNEVLRKYESDKKKEAENLRFEIANLEKLKEELSKITLEISKPVGANGSLFGGVTKDEIAHALKEQSHIEIDKKSLECDTLKSLGIHEVSVKLGHAIHAKFNINIKAE</sequence>
<evidence type="ECO:0000255" key="1">
    <source>
        <dbReference type="HAMAP-Rule" id="MF_00503"/>
    </source>
</evidence>
<evidence type="ECO:0000305" key="2"/>
<feature type="chain" id="PRO_0000176625" description="Large ribosomal subunit protein bL9">
    <location>
        <begin position="1"/>
        <end position="147"/>
    </location>
</feature>
<reference key="1">
    <citation type="journal article" date="2000" name="Nature">
        <title>The genome sequence of the food-borne pathogen Campylobacter jejuni reveals hypervariable sequences.</title>
        <authorList>
            <person name="Parkhill J."/>
            <person name="Wren B.W."/>
            <person name="Mungall K.L."/>
            <person name="Ketley J.M."/>
            <person name="Churcher C.M."/>
            <person name="Basham D."/>
            <person name="Chillingworth T."/>
            <person name="Davies R.M."/>
            <person name="Feltwell T."/>
            <person name="Holroyd S."/>
            <person name="Jagels K."/>
            <person name="Karlyshev A.V."/>
            <person name="Moule S."/>
            <person name="Pallen M.J."/>
            <person name="Penn C.W."/>
            <person name="Quail M.A."/>
            <person name="Rajandream M.A."/>
            <person name="Rutherford K.M."/>
            <person name="van Vliet A.H.M."/>
            <person name="Whitehead S."/>
            <person name="Barrell B.G."/>
        </authorList>
    </citation>
    <scope>NUCLEOTIDE SEQUENCE [LARGE SCALE GENOMIC DNA]</scope>
    <source>
        <strain>ATCC 700819 / NCTC 11168</strain>
    </source>
</reference>
<proteinExistence type="inferred from homology"/>
<name>RL9_CAMJE</name>